<proteinExistence type="evidence at protein level"/>
<reference key="1">
    <citation type="journal article" date="1999" name="Biochem. J.">
        <title>Cloning of a galactose-binding lectin from the venom of Trimeresurus stejnegeri.</title>
        <authorList>
            <person name="Xu Q."/>
            <person name="Wu X.-F."/>
            <person name="Xia Q.-C."/>
            <person name="Wang K.-Y."/>
        </authorList>
    </citation>
    <scope>NUCLEOTIDE SEQUENCE [MRNA]</scope>
    <scope>PROTEIN SEQUENCE OF 24-53</scope>
    <scope>SUBUNIT</scope>
    <scope>MASS SPECTROMETRY</scope>
    <source>
        <tissue>Venom</tissue>
        <tissue>Venom gland</tissue>
    </source>
</reference>
<reference key="2">
    <citation type="journal article" date="1999" name="Eur. J. Biochem.">
        <title>Characterization and analysis of a novel glycoprotein from snake venom using liquid chromatography-electrospray mass spectrometry and Edman degradation.</title>
        <authorList>
            <person name="Zeng R."/>
            <person name="Xu Q."/>
            <person name="Shao X.-X."/>
            <person name="Wang K.-Y."/>
            <person name="Xia Q.-C."/>
        </authorList>
    </citation>
    <scope>PROTEIN SEQUENCE</scope>
    <scope>GLYCOSYLATION AT ASN-28</scope>
    <scope>STRUCTURE OF CARBOHYDRATES</scope>
    <source>
        <tissue>Venom</tissue>
    </source>
</reference>
<feature type="signal peptide" evidence="3">
    <location>
        <begin position="1"/>
        <end position="23"/>
    </location>
</feature>
<feature type="chain" id="PRO_0000017394" description="C-type lectin TsL">
    <location>
        <begin position="24"/>
        <end position="158"/>
    </location>
</feature>
<feature type="domain" description="C-type lectin" evidence="2">
    <location>
        <begin position="24"/>
        <end position="158"/>
    </location>
</feature>
<feature type="short sequence motif" description="Galactose-binding">
    <location>
        <begin position="119"/>
        <end position="121"/>
    </location>
</feature>
<feature type="binding site" evidence="1">
    <location>
        <position position="119"/>
    </location>
    <ligand>
        <name>Ca(2+)</name>
        <dbReference type="ChEBI" id="CHEBI:29108"/>
    </ligand>
</feature>
<feature type="binding site" evidence="1">
    <location>
        <position position="121"/>
    </location>
    <ligand>
        <name>Ca(2+)</name>
        <dbReference type="ChEBI" id="CHEBI:29108"/>
    </ligand>
</feature>
<feature type="binding site" evidence="1">
    <location>
        <position position="127"/>
    </location>
    <ligand>
        <name>Ca(2+)</name>
        <dbReference type="ChEBI" id="CHEBI:29108"/>
    </ligand>
</feature>
<feature type="binding site" evidence="1">
    <location>
        <position position="142"/>
    </location>
    <ligand>
        <name>Ca(2+)</name>
        <dbReference type="ChEBI" id="CHEBI:29108"/>
    </ligand>
</feature>
<feature type="binding site" evidence="1">
    <location>
        <position position="143"/>
    </location>
    <ligand>
        <name>Ca(2+)</name>
        <dbReference type="ChEBI" id="CHEBI:29108"/>
    </ligand>
</feature>
<feature type="glycosylation site" id="CAR_000165" description="N-linked (GlcNAc...) (high mannose) asparagine" evidence="4">
    <location>
        <position position="28"/>
    </location>
</feature>
<feature type="disulfide bond" evidence="2">
    <location>
        <begin position="26"/>
        <end position="37"/>
    </location>
</feature>
<feature type="disulfide bond" evidence="2">
    <location>
        <begin position="54"/>
        <end position="154"/>
    </location>
</feature>
<feature type="disulfide bond" evidence="2">
    <location>
        <begin position="61"/>
        <end position="156"/>
    </location>
</feature>
<feature type="disulfide bond" description="Interchain" evidence="2">
    <location>
        <position position="109"/>
    </location>
</feature>
<feature type="disulfide bond" evidence="2">
    <location>
        <begin position="129"/>
        <end position="146"/>
    </location>
</feature>
<evidence type="ECO:0000250" key="1"/>
<evidence type="ECO:0000255" key="2">
    <source>
        <dbReference type="PROSITE-ProRule" id="PRU00040"/>
    </source>
</evidence>
<evidence type="ECO:0000269" key="3">
    <source>
    </source>
</evidence>
<evidence type="ECO:0000269" key="4">
    <source>
    </source>
</evidence>
<evidence type="ECO:0000305" key="5"/>
<evidence type="ECO:0000305" key="6">
    <source>
    </source>
</evidence>
<name>LECG_TRIST</name>
<protein>
    <recommendedName>
        <fullName>C-type lectin TsL</fullName>
    </recommendedName>
    <alternativeName>
        <fullName>Galactose-binding lectin</fullName>
        <shortName>CTL</shortName>
    </alternativeName>
</protein>
<comment type="function">
    <text>Galactose-binding protein which recognizes specific carbohydrate structures and agglutinates a variety of animal cells by binding to cell-surface glycoproteins and glycolipids. May be a calcium-dependent lectin.</text>
</comment>
<comment type="subunit">
    <text evidence="3">Homodimer; disulfide-linked.</text>
</comment>
<comment type="subcellular location">
    <subcellularLocation>
        <location>Secreted</location>
    </subcellularLocation>
</comment>
<comment type="tissue specificity">
    <text>Expressed by the venom gland.</text>
</comment>
<comment type="mass spectrometry" mass="17924.2" error="2.4" method="Electrospray" evidence="3"/>
<comment type="miscellaneous">
    <text evidence="6">Met-33 has been shown to be oxidized to methionine sulfoxide but this probably results from sample treatment prior to mass spectrometry.</text>
</comment>
<comment type="similarity">
    <text evidence="5">Belongs to the true venom lectin family.</text>
</comment>
<keyword id="KW-0106">Calcium</keyword>
<keyword id="KW-0903">Direct protein sequencing</keyword>
<keyword id="KW-1015">Disulfide bond</keyword>
<keyword id="KW-0325">Glycoprotein</keyword>
<keyword id="KW-0430">Lectin</keyword>
<keyword id="KW-0479">Metal-binding</keyword>
<keyword id="KW-0964">Secreted</keyword>
<keyword id="KW-0732">Signal</keyword>
<sequence length="158" mass="18635">MGRFIFVSFGLLVVFLSLSGAKGSCCTNDSLPMNGMCYKIFDEPKTWEDAEMFCRKYKPGCHLASFHRLAESLDIAEYISDYHKRQAEVWIGLLDRKKDFSWEWTDRSCTDYLNWDKNQPDHYKDKEFCVELVSLTGYHRWNDQVCESKNSFLCQCKF</sequence>
<organism>
    <name type="scientific">Trimeresurus stejnegeri</name>
    <name type="common">Chinese green tree viper</name>
    <name type="synonym">Viridovipera stejnegeri</name>
    <dbReference type="NCBI Taxonomy" id="39682"/>
    <lineage>
        <taxon>Eukaryota</taxon>
        <taxon>Metazoa</taxon>
        <taxon>Chordata</taxon>
        <taxon>Craniata</taxon>
        <taxon>Vertebrata</taxon>
        <taxon>Euteleostomi</taxon>
        <taxon>Lepidosauria</taxon>
        <taxon>Squamata</taxon>
        <taxon>Bifurcata</taxon>
        <taxon>Unidentata</taxon>
        <taxon>Episquamata</taxon>
        <taxon>Toxicofera</taxon>
        <taxon>Serpentes</taxon>
        <taxon>Colubroidea</taxon>
        <taxon>Viperidae</taxon>
        <taxon>Crotalinae</taxon>
        <taxon>Trimeresurus</taxon>
    </lineage>
</organism>
<accession>Q9YGP1</accession>
<dbReference type="EMBL" id="AF119097">
    <property type="protein sequence ID" value="AAD17252.1"/>
    <property type="molecule type" value="mRNA"/>
</dbReference>
<dbReference type="SMR" id="Q9YGP1"/>
<dbReference type="GlyConnect" id="169">
    <property type="glycosylation" value="5 N-Linked glycans (1 site)"/>
</dbReference>
<dbReference type="GO" id="GO:0005576">
    <property type="term" value="C:extracellular region"/>
    <property type="evidence" value="ECO:0007669"/>
    <property type="project" value="UniProtKB-SubCell"/>
</dbReference>
<dbReference type="GO" id="GO:0030246">
    <property type="term" value="F:carbohydrate binding"/>
    <property type="evidence" value="ECO:0007669"/>
    <property type="project" value="UniProtKB-KW"/>
</dbReference>
<dbReference type="GO" id="GO:0046872">
    <property type="term" value="F:metal ion binding"/>
    <property type="evidence" value="ECO:0007669"/>
    <property type="project" value="UniProtKB-KW"/>
</dbReference>
<dbReference type="CDD" id="cd03594">
    <property type="entry name" value="CLECT_REG-1_like"/>
    <property type="match status" value="1"/>
</dbReference>
<dbReference type="FunFam" id="3.10.100.10:FF:000015">
    <property type="entry name" value="C-type lectin Cal"/>
    <property type="match status" value="1"/>
</dbReference>
<dbReference type="Gene3D" id="3.10.100.10">
    <property type="entry name" value="Mannose-Binding Protein A, subunit A"/>
    <property type="match status" value="1"/>
</dbReference>
<dbReference type="InterPro" id="IPR001304">
    <property type="entry name" value="C-type_lectin-like"/>
</dbReference>
<dbReference type="InterPro" id="IPR016186">
    <property type="entry name" value="C-type_lectin-like/link_sf"/>
</dbReference>
<dbReference type="InterPro" id="IPR050111">
    <property type="entry name" value="C-type_lectin/snaclec_domain"/>
</dbReference>
<dbReference type="InterPro" id="IPR018378">
    <property type="entry name" value="C-type_lectin_CS"/>
</dbReference>
<dbReference type="InterPro" id="IPR016187">
    <property type="entry name" value="CTDL_fold"/>
</dbReference>
<dbReference type="PANTHER" id="PTHR22803">
    <property type="entry name" value="MANNOSE, PHOSPHOLIPASE, LECTIN RECEPTOR RELATED"/>
    <property type="match status" value="1"/>
</dbReference>
<dbReference type="Pfam" id="PF00059">
    <property type="entry name" value="Lectin_C"/>
    <property type="match status" value="1"/>
</dbReference>
<dbReference type="PRINTS" id="PR01504">
    <property type="entry name" value="PNCREATITSAP"/>
</dbReference>
<dbReference type="SMART" id="SM00034">
    <property type="entry name" value="CLECT"/>
    <property type="match status" value="1"/>
</dbReference>
<dbReference type="SUPFAM" id="SSF56436">
    <property type="entry name" value="C-type lectin-like"/>
    <property type="match status" value="1"/>
</dbReference>
<dbReference type="PROSITE" id="PS00615">
    <property type="entry name" value="C_TYPE_LECTIN_1"/>
    <property type="match status" value="1"/>
</dbReference>
<dbReference type="PROSITE" id="PS50041">
    <property type="entry name" value="C_TYPE_LECTIN_2"/>
    <property type="match status" value="1"/>
</dbReference>